<evidence type="ECO:0000255" key="1"/>
<evidence type="ECO:0000269" key="2">
    <source>
    </source>
</evidence>
<evidence type="ECO:0000305" key="3"/>
<evidence type="ECO:0000312" key="4">
    <source>
        <dbReference type="Proteomes" id="UP000001940"/>
    </source>
</evidence>
<evidence type="ECO:0000312" key="5">
    <source>
        <dbReference type="WormBase" id="C25A1.12a"/>
    </source>
</evidence>
<dbReference type="EMBL" id="BX284601">
    <property type="protein sequence ID" value="CAB02763.2"/>
    <property type="molecule type" value="Genomic_DNA"/>
</dbReference>
<dbReference type="RefSeq" id="NP_492685.2">
    <property type="nucleotide sequence ID" value="NM_060284.4"/>
</dbReference>
<dbReference type="SMR" id="O02218"/>
<dbReference type="FunCoup" id="O02218">
    <property type="interactions" value="1209"/>
</dbReference>
<dbReference type="STRING" id="6239.C25A1.12b.2"/>
<dbReference type="ESTHER" id="caeel-C25A1.12">
    <property type="family name" value="CGI-58_ABHD5_ABHD4"/>
</dbReference>
<dbReference type="MEROPS" id="S33.975"/>
<dbReference type="PaxDb" id="6239-C25A1.12"/>
<dbReference type="PeptideAtlas" id="O02218"/>
<dbReference type="EnsemblMetazoa" id="C25A1.12a.1">
    <property type="protein sequence ID" value="C25A1.12a.1"/>
    <property type="gene ID" value="WBGene00007711"/>
</dbReference>
<dbReference type="GeneID" id="172888"/>
<dbReference type="KEGG" id="cel:CELE_C25A1.12"/>
<dbReference type="UCSC" id="C25A1.12">
    <property type="organism name" value="c. elegans"/>
</dbReference>
<dbReference type="AGR" id="WB:WBGene00007711"/>
<dbReference type="CTD" id="172888"/>
<dbReference type="WormBase" id="C25A1.12a">
    <property type="protein sequence ID" value="CE41871"/>
    <property type="gene ID" value="WBGene00007711"/>
    <property type="gene designation" value="lid-1"/>
</dbReference>
<dbReference type="eggNOG" id="KOG4409">
    <property type="taxonomic scope" value="Eukaryota"/>
</dbReference>
<dbReference type="HOGENOM" id="CLU_017361_0_0_1"/>
<dbReference type="InParanoid" id="O02218"/>
<dbReference type="OMA" id="RVQNDLW"/>
<dbReference type="OrthoDB" id="7457040at2759"/>
<dbReference type="PhylomeDB" id="O02218"/>
<dbReference type="Reactome" id="R-CEL-1482839">
    <property type="pathway name" value="Acyl chain remodelling of PE"/>
</dbReference>
<dbReference type="PRO" id="PR:O02218"/>
<dbReference type="Proteomes" id="UP000001940">
    <property type="component" value="Chromosome I"/>
</dbReference>
<dbReference type="Bgee" id="WBGene00007711">
    <property type="expression patterns" value="Expressed in germ line (C elegans) and 4 other cell types or tissues"/>
</dbReference>
<dbReference type="ExpressionAtlas" id="O02218">
    <property type="expression patterns" value="baseline and differential"/>
</dbReference>
<dbReference type="GO" id="GO:0005811">
    <property type="term" value="C:lipid droplet"/>
    <property type="evidence" value="ECO:0000314"/>
    <property type="project" value="WormBase"/>
</dbReference>
<dbReference type="GO" id="GO:0005739">
    <property type="term" value="C:mitochondrion"/>
    <property type="evidence" value="ECO:0000318"/>
    <property type="project" value="GO_Central"/>
</dbReference>
<dbReference type="GO" id="GO:0052689">
    <property type="term" value="F:carboxylic ester hydrolase activity"/>
    <property type="evidence" value="ECO:0000318"/>
    <property type="project" value="GO_Central"/>
</dbReference>
<dbReference type="GO" id="GO:0042171">
    <property type="term" value="F:lysophosphatidic acid acyltransferase activity"/>
    <property type="evidence" value="ECO:0000318"/>
    <property type="project" value="GO_Central"/>
</dbReference>
<dbReference type="GO" id="GO:0016042">
    <property type="term" value="P:lipid catabolic process"/>
    <property type="evidence" value="ECO:0007669"/>
    <property type="project" value="UniProtKB-KW"/>
</dbReference>
<dbReference type="GO" id="GO:0055088">
    <property type="term" value="P:lipid homeostasis"/>
    <property type="evidence" value="ECO:0000318"/>
    <property type="project" value="GO_Central"/>
</dbReference>
<dbReference type="GO" id="GO:0006654">
    <property type="term" value="P:phosphatidic acid biosynthetic process"/>
    <property type="evidence" value="ECO:0000318"/>
    <property type="project" value="GO_Central"/>
</dbReference>
<dbReference type="FunFam" id="3.40.50.1820:FF:000600">
    <property type="entry name" value="Abhydrolase domain-containing protein lid-1"/>
    <property type="match status" value="1"/>
</dbReference>
<dbReference type="Gene3D" id="3.40.50.1820">
    <property type="entry name" value="alpha/beta hydrolase"/>
    <property type="match status" value="1"/>
</dbReference>
<dbReference type="InterPro" id="IPR000073">
    <property type="entry name" value="AB_hydrolase_1"/>
</dbReference>
<dbReference type="InterPro" id="IPR029058">
    <property type="entry name" value="AB_hydrolase_fold"/>
</dbReference>
<dbReference type="PANTHER" id="PTHR42886:SF29">
    <property type="entry name" value="PUMMELIG, ISOFORM A"/>
    <property type="match status" value="1"/>
</dbReference>
<dbReference type="PANTHER" id="PTHR42886">
    <property type="entry name" value="RE40534P-RELATED"/>
    <property type="match status" value="1"/>
</dbReference>
<dbReference type="Pfam" id="PF00561">
    <property type="entry name" value="Abhydrolase_1"/>
    <property type="match status" value="1"/>
</dbReference>
<dbReference type="PRINTS" id="PR00111">
    <property type="entry name" value="ABHYDROLASE"/>
</dbReference>
<dbReference type="SUPFAM" id="SSF53474">
    <property type="entry name" value="alpha/beta-Hydrolases"/>
    <property type="match status" value="1"/>
</dbReference>
<organism evidence="4">
    <name type="scientific">Caenorhabditis elegans</name>
    <dbReference type="NCBI Taxonomy" id="6239"/>
    <lineage>
        <taxon>Eukaryota</taxon>
        <taxon>Metazoa</taxon>
        <taxon>Ecdysozoa</taxon>
        <taxon>Nematoda</taxon>
        <taxon>Chromadorea</taxon>
        <taxon>Rhabditida</taxon>
        <taxon>Rhabditina</taxon>
        <taxon>Rhabditomorpha</taxon>
        <taxon>Rhabditoidea</taxon>
        <taxon>Rhabditidae</taxon>
        <taxon>Peloderinae</taxon>
        <taxon>Caenorhabditis</taxon>
    </lineage>
</organism>
<gene>
    <name evidence="5" type="primary">lid-1</name>
    <name evidence="5" type="ORF">C25A1.12</name>
</gene>
<name>LID1_CAEEL</name>
<reference evidence="4" key="1">
    <citation type="journal article" date="1998" name="Science">
        <title>Genome sequence of the nematode C. elegans: a platform for investigating biology.</title>
        <authorList>
            <consortium name="The C. elegans sequencing consortium"/>
        </authorList>
    </citation>
    <scope>NUCLEOTIDE SEQUENCE [LARGE SCALE GENOMIC DNA]</scope>
    <source>
        <strain evidence="4">Bristol N2</strain>
    </source>
</reference>
<reference evidence="3" key="2">
    <citation type="journal article" date="2014" name="Mol. Cell. Biol.">
        <title>Lipid droplet protein LID-1 mediates ATGL-1-dependent lipolysis during fasting in Caenorhabditis elegans.</title>
        <authorList>
            <person name="Lee J.H."/>
            <person name="Kong J."/>
            <person name="Jang J.Y."/>
            <person name="Han J.S."/>
            <person name="Ji Y."/>
            <person name="Lee J."/>
            <person name="Kim J.B."/>
        </authorList>
    </citation>
    <scope>FUNCTION</scope>
    <scope>INTERACTION WITH ATGL-1</scope>
    <scope>SUBCELLULAR LOCATION</scope>
    <scope>DOMAIN</scope>
    <scope>DISRUPTION PHENOTYPE</scope>
</reference>
<accession>O02218</accession>
<keyword id="KW-0442">Lipid degradation</keyword>
<keyword id="KW-0551">Lipid droplet</keyword>
<keyword id="KW-0443">Lipid metabolism</keyword>
<keyword id="KW-1185">Reference proteome</keyword>
<comment type="function">
    <text evidence="2">Acts coordinately with atgl-1 within the lipolytic cascade to distribute stored energy to tissues during nutritional deprivation.</text>
</comment>
<comment type="subunit">
    <text evidence="2">Interacts with atgl-1.</text>
</comment>
<comment type="subcellular location">
    <subcellularLocation>
        <location evidence="2">Lipid droplet</location>
    </subcellularLocation>
    <text evidence="2">Forms ring-like structures on the surface of lipid droplets.</text>
</comment>
<comment type="disruption phenotype">
    <text evidence="2">RNAi-mediated knockdown suppresses fasting-induced oxygen consumption.</text>
</comment>
<comment type="similarity">
    <text evidence="3">Belongs to the peptidase S33 family. ABHD4/ABHD5 subfamily.</text>
</comment>
<sequence>MAIATTKTALTTIMNWMTFTDDSKEQLKIVEGRLFQSCEVSYEAKYVPVRFKRGEVYTVTVRPREAENLNGEAIVFIPGLGAGVAMFTANFNSCAKNHAVHSFDPLGFGRSSRSRFSDDNAIAELEMVEVMEDWRKAMGIEKMYIIGHAFGGYLASAYALENPSRVAHLILVDPWGFAEKVETTEKLIKPYAWMSFLGGVAGYFNPFSPMRWMGPYAPAIVKKLRPDLLLRFPGLHDYDIYKYVYYLNLPNPTGETAFMNMTLPVGWAKRPMIKRFNGIDKNVGVSFIYGSKSWIDPGPAIDIQSTRENAYVDIKIVRGAGTHVYADDPAAFNEIVSDVVEGRLSNPSNDFEIEECCHSD</sequence>
<proteinExistence type="evidence at protein level"/>
<feature type="chain" id="PRO_0000435426" description="Abhydrolase domain-containing protein lid-1">
    <location>
        <begin position="1"/>
        <end position="360"/>
    </location>
</feature>
<feature type="domain" description="AB hydrolase-1" evidence="1">
    <location>
        <begin position="73"/>
        <end position="203"/>
    </location>
</feature>
<protein>
    <recommendedName>
        <fullName evidence="3">Abhydrolase domain-containing protein lid-1</fullName>
    </recommendedName>
    <alternativeName>
        <fullName evidence="5">Lipid droplet protein 1</fullName>
    </alternativeName>
</protein>